<organism>
    <name type="scientific">Roseiflexus sp. (strain RS-1)</name>
    <dbReference type="NCBI Taxonomy" id="357808"/>
    <lineage>
        <taxon>Bacteria</taxon>
        <taxon>Bacillati</taxon>
        <taxon>Chloroflexota</taxon>
        <taxon>Chloroflexia</taxon>
        <taxon>Chloroflexales</taxon>
        <taxon>Roseiflexineae</taxon>
        <taxon>Roseiflexaceae</taxon>
        <taxon>Roseiflexus</taxon>
    </lineage>
</organism>
<gene>
    <name type="ordered locus">RoseRS_0767</name>
</gene>
<proteinExistence type="inferred from homology"/>
<keyword id="KW-0378">Hydrolase</keyword>
<keyword id="KW-0479">Metal-binding</keyword>
<keyword id="KW-0482">Metalloprotease</keyword>
<keyword id="KW-0645">Protease</keyword>
<keyword id="KW-0862">Zinc</keyword>
<accession>A5URD0</accession>
<comment type="similarity">
    <text evidence="2">Belongs to the UPF0758 family.</text>
</comment>
<dbReference type="EMBL" id="CP000686">
    <property type="protein sequence ID" value="ABQ89183.1"/>
    <property type="molecule type" value="Genomic_DNA"/>
</dbReference>
<dbReference type="RefSeq" id="WP_011955537.1">
    <property type="nucleotide sequence ID" value="NC_009523.1"/>
</dbReference>
<dbReference type="SMR" id="A5URD0"/>
<dbReference type="STRING" id="357808.RoseRS_0767"/>
<dbReference type="KEGG" id="rrs:RoseRS_0767"/>
<dbReference type="eggNOG" id="COG2003">
    <property type="taxonomic scope" value="Bacteria"/>
</dbReference>
<dbReference type="HOGENOM" id="CLU_073529_0_2_0"/>
<dbReference type="OrthoDB" id="9804482at2"/>
<dbReference type="Proteomes" id="UP000006554">
    <property type="component" value="Chromosome"/>
</dbReference>
<dbReference type="GO" id="GO:0046872">
    <property type="term" value="F:metal ion binding"/>
    <property type="evidence" value="ECO:0007669"/>
    <property type="project" value="UniProtKB-KW"/>
</dbReference>
<dbReference type="GO" id="GO:0008237">
    <property type="term" value="F:metallopeptidase activity"/>
    <property type="evidence" value="ECO:0007669"/>
    <property type="project" value="UniProtKB-KW"/>
</dbReference>
<dbReference type="GO" id="GO:0006508">
    <property type="term" value="P:proteolysis"/>
    <property type="evidence" value="ECO:0007669"/>
    <property type="project" value="UniProtKB-KW"/>
</dbReference>
<dbReference type="CDD" id="cd08071">
    <property type="entry name" value="MPN_DUF2466"/>
    <property type="match status" value="1"/>
</dbReference>
<dbReference type="Gene3D" id="3.40.140.10">
    <property type="entry name" value="Cytidine Deaminase, domain 2"/>
    <property type="match status" value="1"/>
</dbReference>
<dbReference type="InterPro" id="IPR037518">
    <property type="entry name" value="MPN"/>
</dbReference>
<dbReference type="InterPro" id="IPR025657">
    <property type="entry name" value="RadC_JAB"/>
</dbReference>
<dbReference type="InterPro" id="IPR010994">
    <property type="entry name" value="RuvA_2-like"/>
</dbReference>
<dbReference type="InterPro" id="IPR001405">
    <property type="entry name" value="UPF0758"/>
</dbReference>
<dbReference type="InterPro" id="IPR020891">
    <property type="entry name" value="UPF0758_CS"/>
</dbReference>
<dbReference type="InterPro" id="IPR046778">
    <property type="entry name" value="UPF0758_N"/>
</dbReference>
<dbReference type="NCBIfam" id="NF000642">
    <property type="entry name" value="PRK00024.1"/>
    <property type="match status" value="1"/>
</dbReference>
<dbReference type="NCBIfam" id="TIGR00608">
    <property type="entry name" value="radc"/>
    <property type="match status" value="1"/>
</dbReference>
<dbReference type="PANTHER" id="PTHR30471">
    <property type="entry name" value="DNA REPAIR PROTEIN RADC"/>
    <property type="match status" value="1"/>
</dbReference>
<dbReference type="PANTHER" id="PTHR30471:SF3">
    <property type="entry name" value="UPF0758 PROTEIN YEES-RELATED"/>
    <property type="match status" value="1"/>
</dbReference>
<dbReference type="Pfam" id="PF04002">
    <property type="entry name" value="RadC"/>
    <property type="match status" value="1"/>
</dbReference>
<dbReference type="Pfam" id="PF20582">
    <property type="entry name" value="UPF0758_N"/>
    <property type="match status" value="1"/>
</dbReference>
<dbReference type="SUPFAM" id="SSF47781">
    <property type="entry name" value="RuvA domain 2-like"/>
    <property type="match status" value="1"/>
</dbReference>
<dbReference type="PROSITE" id="PS50249">
    <property type="entry name" value="MPN"/>
    <property type="match status" value="1"/>
</dbReference>
<dbReference type="PROSITE" id="PS01302">
    <property type="entry name" value="UPF0758"/>
    <property type="match status" value="1"/>
</dbReference>
<sequence>MTEYHVRIRELPPTDKPRERLRSSGAAALADAELLAILLRVGIEGMNAIQLAQQLLVEFGGWNGLQRAGFEELAQRRGMGEAKTAQLKAALEIGRRLLLAGGDERFLIRSPTDAAQLMQIEMSHLDQEQLRAICLDTKNRVQKIQTVYIGSLHTSMVRIGEIFKEPIRLNSASIIVVHNHPSGDPTPSPEDVVVTRQIIEAGRLLDIDVLDHLVIGAGRFVSMRERGLGFGKP</sequence>
<protein>
    <recommendedName>
        <fullName>UPF0758 protein RoseRS_0767</fullName>
    </recommendedName>
</protein>
<feature type="chain" id="PRO_1000001687" description="UPF0758 protein RoseRS_0767">
    <location>
        <begin position="1"/>
        <end position="233"/>
    </location>
</feature>
<feature type="domain" description="MPN" evidence="1">
    <location>
        <begin position="107"/>
        <end position="229"/>
    </location>
</feature>
<feature type="short sequence motif" description="JAMM motif" evidence="1">
    <location>
        <begin position="178"/>
        <end position="191"/>
    </location>
</feature>
<feature type="binding site" evidence="1">
    <location>
        <position position="178"/>
    </location>
    <ligand>
        <name>Zn(2+)</name>
        <dbReference type="ChEBI" id="CHEBI:29105"/>
        <note>catalytic</note>
    </ligand>
</feature>
<feature type="binding site" evidence="1">
    <location>
        <position position="180"/>
    </location>
    <ligand>
        <name>Zn(2+)</name>
        <dbReference type="ChEBI" id="CHEBI:29105"/>
        <note>catalytic</note>
    </ligand>
</feature>
<feature type="binding site" evidence="1">
    <location>
        <position position="191"/>
    </location>
    <ligand>
        <name>Zn(2+)</name>
        <dbReference type="ChEBI" id="CHEBI:29105"/>
        <note>catalytic</note>
    </ligand>
</feature>
<reference key="1">
    <citation type="submission" date="2007-04" db="EMBL/GenBank/DDBJ databases">
        <title>Complete sequence of Roseiflexus sp. RS-1.</title>
        <authorList>
            <consortium name="US DOE Joint Genome Institute"/>
            <person name="Copeland A."/>
            <person name="Lucas S."/>
            <person name="Lapidus A."/>
            <person name="Barry K."/>
            <person name="Detter J.C."/>
            <person name="Glavina del Rio T."/>
            <person name="Hammon N."/>
            <person name="Israni S."/>
            <person name="Dalin E."/>
            <person name="Tice H."/>
            <person name="Pitluck S."/>
            <person name="Chertkov O."/>
            <person name="Brettin T."/>
            <person name="Bruce D."/>
            <person name="Han C."/>
            <person name="Schmutz J."/>
            <person name="Larimer F."/>
            <person name="Land M."/>
            <person name="Hauser L."/>
            <person name="Kyrpides N."/>
            <person name="Mikhailova N."/>
            <person name="Bryant D.A."/>
            <person name="Richardson P."/>
        </authorList>
    </citation>
    <scope>NUCLEOTIDE SEQUENCE [LARGE SCALE GENOMIC DNA]</scope>
    <source>
        <strain>RS-1</strain>
    </source>
</reference>
<evidence type="ECO:0000255" key="1">
    <source>
        <dbReference type="PROSITE-ProRule" id="PRU01182"/>
    </source>
</evidence>
<evidence type="ECO:0000305" key="2"/>
<name>Y767_ROSS1</name>